<feature type="signal peptide" evidence="2">
    <location>
        <begin position="1"/>
        <end position="21"/>
    </location>
</feature>
<feature type="chain" id="PRO_0000267485" description="Astakine">
    <location>
        <begin position="22"/>
        <end position="124"/>
    </location>
</feature>
<feature type="disulfide bond" evidence="1">
    <location>
        <begin position="28"/>
        <end position="40"/>
    </location>
</feature>
<feature type="disulfide bond" evidence="1">
    <location>
        <begin position="34"/>
        <end position="52"/>
    </location>
</feature>
<feature type="disulfide bond" evidence="1">
    <location>
        <begin position="39"/>
        <end position="91"/>
    </location>
</feature>
<feature type="disulfide bond" evidence="1">
    <location>
        <begin position="62"/>
        <end position="99"/>
    </location>
</feature>
<feature type="disulfide bond" evidence="1">
    <location>
        <begin position="93"/>
        <end position="106"/>
    </location>
</feature>
<reference key="1">
    <citation type="journal article" date="2005" name="J. Immunol.">
        <title>An ancient role for a prokineticin domain in invertebrate hematopoiesis.</title>
        <authorList>
            <person name="Soderhall I."/>
            <person name="Kim Y.-A."/>
            <person name="Jiravanichpaisal P."/>
            <person name="Lee S.-Y."/>
            <person name="Soderhall K."/>
        </authorList>
    </citation>
    <scope>NUCLEOTIDE SEQUENCE [MRNA]</scope>
</reference>
<organism>
    <name type="scientific">Penaeus monodon</name>
    <name type="common">Giant tiger prawn</name>
    <dbReference type="NCBI Taxonomy" id="6687"/>
    <lineage>
        <taxon>Eukaryota</taxon>
        <taxon>Metazoa</taxon>
        <taxon>Ecdysozoa</taxon>
        <taxon>Arthropoda</taxon>
        <taxon>Crustacea</taxon>
        <taxon>Multicrustacea</taxon>
        <taxon>Malacostraca</taxon>
        <taxon>Eumalacostraca</taxon>
        <taxon>Eucarida</taxon>
        <taxon>Decapoda</taxon>
        <taxon>Dendrobranchiata</taxon>
        <taxon>Penaeoidea</taxon>
        <taxon>Penaeidae</taxon>
        <taxon>Penaeus</taxon>
    </lineage>
</organism>
<comment type="function">
    <text evidence="1">Cytokine directly involved in hematopoiesis.</text>
</comment>
<comment type="subcellular location">
    <subcellularLocation>
        <location evidence="1">Secreted</location>
    </subcellularLocation>
</comment>
<comment type="similarity">
    <text evidence="3">Belongs to the AVIT (prokineticin) family.</text>
</comment>
<protein>
    <recommendedName>
        <fullName>Astakine</fullName>
    </recommendedName>
</protein>
<dbReference type="EMBL" id="AY787657">
    <property type="protein sequence ID" value="AAX14636.1"/>
    <property type="molecule type" value="mRNA"/>
</dbReference>
<dbReference type="EnsemblMetazoa" id="XM_037939338.1">
    <property type="protein sequence ID" value="XP_037795266.1"/>
    <property type="gene ID" value="LOC119590661"/>
</dbReference>
<dbReference type="OrthoDB" id="6335612at2759"/>
<dbReference type="GO" id="GO:0005576">
    <property type="term" value="C:extracellular region"/>
    <property type="evidence" value="ECO:0007669"/>
    <property type="project" value="UniProtKB-SubCell"/>
</dbReference>
<dbReference type="Gene3D" id="2.10.80.10">
    <property type="entry name" value="Lipase, subunit A"/>
    <property type="match status" value="1"/>
</dbReference>
<dbReference type="InterPro" id="IPR023569">
    <property type="entry name" value="Prokineticin_domain"/>
</dbReference>
<dbReference type="Pfam" id="PF06607">
    <property type="entry name" value="Prokineticin"/>
    <property type="match status" value="1"/>
</dbReference>
<sequence>MAVSSAVRMLSVACLVVSAAGMRRLGDCSSSADCGPGACCTIGFNRYSIPQCTPLGDLGDWCRVMNPPRELSLAYPNGLQVLLTDSYHGMCPCRPELACSRATSTCQLPQESTQHQEDNSLYKD</sequence>
<name>ASTA_PENMO</name>
<evidence type="ECO:0000250" key="1"/>
<evidence type="ECO:0000255" key="2"/>
<evidence type="ECO:0000305" key="3"/>
<accession>Q56R10</accession>
<keyword id="KW-1015">Disulfide bond</keyword>
<keyword id="KW-0964">Secreted</keyword>
<keyword id="KW-0732">Signal</keyword>
<proteinExistence type="evidence at transcript level"/>